<protein>
    <recommendedName>
        <fullName evidence="1">Large ribosomal subunit protein bL27</fullName>
    </recommendedName>
    <alternativeName>
        <fullName evidence="2">50S ribosomal protein L27</fullName>
    </alternativeName>
</protein>
<dbReference type="EMBL" id="AL111168">
    <property type="protein sequence ID" value="CAL34266.1"/>
    <property type="molecule type" value="Genomic_DNA"/>
</dbReference>
<dbReference type="PIR" id="G81425">
    <property type="entry name" value="G81425"/>
</dbReference>
<dbReference type="RefSeq" id="WP_002800974.1">
    <property type="nucleotide sequence ID" value="NZ_SZUC01000005.1"/>
</dbReference>
<dbReference type="RefSeq" id="YP_002343555.1">
    <property type="nucleotide sequence ID" value="NC_002163.1"/>
</dbReference>
<dbReference type="SMR" id="Q9PJ31"/>
<dbReference type="IntAct" id="Q9PJ31">
    <property type="interactions" value="13"/>
</dbReference>
<dbReference type="STRING" id="192222.Cj0095"/>
<dbReference type="PaxDb" id="192222-Cj0095"/>
<dbReference type="EnsemblBacteria" id="CAL34266">
    <property type="protein sequence ID" value="CAL34266"/>
    <property type="gene ID" value="Cj0095"/>
</dbReference>
<dbReference type="GeneID" id="904423"/>
<dbReference type="GeneID" id="98394801"/>
<dbReference type="KEGG" id="cje:Cj0095"/>
<dbReference type="PATRIC" id="fig|192222.6.peg.93"/>
<dbReference type="eggNOG" id="COG0211">
    <property type="taxonomic scope" value="Bacteria"/>
</dbReference>
<dbReference type="HOGENOM" id="CLU_095424_4_0_7"/>
<dbReference type="OrthoDB" id="9803474at2"/>
<dbReference type="PRO" id="PR:Q9PJ31"/>
<dbReference type="Proteomes" id="UP000000799">
    <property type="component" value="Chromosome"/>
</dbReference>
<dbReference type="GO" id="GO:0022625">
    <property type="term" value="C:cytosolic large ribosomal subunit"/>
    <property type="evidence" value="ECO:0007669"/>
    <property type="project" value="TreeGrafter"/>
</dbReference>
<dbReference type="GO" id="GO:0003735">
    <property type="term" value="F:structural constituent of ribosome"/>
    <property type="evidence" value="ECO:0007669"/>
    <property type="project" value="InterPro"/>
</dbReference>
<dbReference type="GO" id="GO:0006412">
    <property type="term" value="P:translation"/>
    <property type="evidence" value="ECO:0007669"/>
    <property type="project" value="UniProtKB-UniRule"/>
</dbReference>
<dbReference type="FunFam" id="2.40.50.100:FF:000004">
    <property type="entry name" value="50S ribosomal protein L27"/>
    <property type="match status" value="1"/>
</dbReference>
<dbReference type="Gene3D" id="2.40.50.100">
    <property type="match status" value="1"/>
</dbReference>
<dbReference type="HAMAP" id="MF_00539">
    <property type="entry name" value="Ribosomal_bL27"/>
    <property type="match status" value="1"/>
</dbReference>
<dbReference type="InterPro" id="IPR001684">
    <property type="entry name" value="Ribosomal_bL27"/>
</dbReference>
<dbReference type="InterPro" id="IPR018261">
    <property type="entry name" value="Ribosomal_bL27_CS"/>
</dbReference>
<dbReference type="NCBIfam" id="TIGR00062">
    <property type="entry name" value="L27"/>
    <property type="match status" value="1"/>
</dbReference>
<dbReference type="PANTHER" id="PTHR15893:SF0">
    <property type="entry name" value="LARGE RIBOSOMAL SUBUNIT PROTEIN BL27M"/>
    <property type="match status" value="1"/>
</dbReference>
<dbReference type="PANTHER" id="PTHR15893">
    <property type="entry name" value="RIBOSOMAL PROTEIN L27"/>
    <property type="match status" value="1"/>
</dbReference>
<dbReference type="Pfam" id="PF01016">
    <property type="entry name" value="Ribosomal_L27"/>
    <property type="match status" value="1"/>
</dbReference>
<dbReference type="PRINTS" id="PR00063">
    <property type="entry name" value="RIBOSOMALL27"/>
</dbReference>
<dbReference type="SUPFAM" id="SSF110324">
    <property type="entry name" value="Ribosomal L27 protein-like"/>
    <property type="match status" value="1"/>
</dbReference>
<dbReference type="PROSITE" id="PS00831">
    <property type="entry name" value="RIBOSOMAL_L27"/>
    <property type="match status" value="1"/>
</dbReference>
<gene>
    <name evidence="1" type="primary">rpmA</name>
    <name type="ordered locus">Cj0095</name>
</gene>
<reference key="1">
    <citation type="journal article" date="2000" name="Nature">
        <title>The genome sequence of the food-borne pathogen Campylobacter jejuni reveals hypervariable sequences.</title>
        <authorList>
            <person name="Parkhill J."/>
            <person name="Wren B.W."/>
            <person name="Mungall K.L."/>
            <person name="Ketley J.M."/>
            <person name="Churcher C.M."/>
            <person name="Basham D."/>
            <person name="Chillingworth T."/>
            <person name="Davies R.M."/>
            <person name="Feltwell T."/>
            <person name="Holroyd S."/>
            <person name="Jagels K."/>
            <person name="Karlyshev A.V."/>
            <person name="Moule S."/>
            <person name="Pallen M.J."/>
            <person name="Penn C.W."/>
            <person name="Quail M.A."/>
            <person name="Rajandream M.A."/>
            <person name="Rutherford K.M."/>
            <person name="van Vliet A.H.M."/>
            <person name="Whitehead S."/>
            <person name="Barrell B.G."/>
        </authorList>
    </citation>
    <scope>NUCLEOTIDE SEQUENCE [LARGE SCALE GENOMIC DNA]</scope>
    <source>
        <strain>ATCC 700819 / NCTC 11168</strain>
    </source>
</reference>
<feature type="chain" id="PRO_0000181064" description="Large ribosomal subunit protein bL27">
    <location>
        <begin position="1"/>
        <end position="84"/>
    </location>
</feature>
<organism>
    <name type="scientific">Campylobacter jejuni subsp. jejuni serotype O:2 (strain ATCC 700819 / NCTC 11168)</name>
    <dbReference type="NCBI Taxonomy" id="192222"/>
    <lineage>
        <taxon>Bacteria</taxon>
        <taxon>Pseudomonadati</taxon>
        <taxon>Campylobacterota</taxon>
        <taxon>Epsilonproteobacteria</taxon>
        <taxon>Campylobacterales</taxon>
        <taxon>Campylobacteraceae</taxon>
        <taxon>Campylobacter</taxon>
    </lineage>
</organism>
<proteinExistence type="inferred from homology"/>
<sequence length="84" mass="9285">MAHKKGQGSTQNNRDSIGRRLGVKKFGGEFVRAGNIIIRQRGTATHAGNNVGMGKDHTIFALIDGFVKFERKDKDRKKVSVYPA</sequence>
<name>RL27_CAMJE</name>
<evidence type="ECO:0000255" key="1">
    <source>
        <dbReference type="HAMAP-Rule" id="MF_00539"/>
    </source>
</evidence>
<evidence type="ECO:0000305" key="2"/>
<accession>Q9PJ31</accession>
<accession>Q0PC42</accession>
<keyword id="KW-1185">Reference proteome</keyword>
<keyword id="KW-0687">Ribonucleoprotein</keyword>
<keyword id="KW-0689">Ribosomal protein</keyword>
<comment type="similarity">
    <text evidence="1">Belongs to the bacterial ribosomal protein bL27 family.</text>
</comment>